<keyword id="KW-1015">Disulfide bond</keyword>
<keyword id="KW-0873">Pyrrolidone carboxylic acid</keyword>
<keyword id="KW-0964">Secreted</keyword>
<keyword id="KW-0732">Signal</keyword>
<keyword id="KW-0800">Toxin</keyword>
<organism>
    <name type="scientific">Conus capitaneus</name>
    <name type="common">Captain cone</name>
    <dbReference type="NCBI Taxonomy" id="89439"/>
    <lineage>
        <taxon>Eukaryota</taxon>
        <taxon>Metazoa</taxon>
        <taxon>Spiralia</taxon>
        <taxon>Lophotrochozoa</taxon>
        <taxon>Mollusca</taxon>
        <taxon>Gastropoda</taxon>
        <taxon>Caenogastropoda</taxon>
        <taxon>Neogastropoda</taxon>
        <taxon>Conoidea</taxon>
        <taxon>Conidae</taxon>
        <taxon>Conus</taxon>
        <taxon>Rhizoconus</taxon>
    </lineage>
</organism>
<accession>C8CK78</accession>
<sequence length="85" mass="9733">MEKLTFLILVATVLLTIHVLVQSDGDKHLKRRPKQYATKRLSALMRGHRQCTPQNVKCEEDDECCSNLECKCSTVPDCNFPKCRP</sequence>
<evidence type="ECO:0000250" key="1"/>
<evidence type="ECO:0000255" key="2"/>
<evidence type="ECO:0000305" key="3"/>
<comment type="subcellular location">
    <subcellularLocation>
        <location evidence="1">Secreted</location>
    </subcellularLocation>
</comment>
<comment type="tissue specificity">
    <text>Expressed by the venom duct.</text>
</comment>
<comment type="domain">
    <text>The cysteine framework is XV (C-C-CC-C-C-C-C).</text>
</comment>
<comment type="PTM">
    <text evidence="1">Contains 4 disulfide bonds.</text>
</comment>
<comment type="similarity">
    <text evidence="3">Belongs to the conotoxin O2 superfamily.</text>
</comment>
<feature type="signal peptide" evidence="2">
    <location>
        <begin position="1"/>
        <end position="23"/>
    </location>
</feature>
<feature type="propeptide" id="PRO_0000392184" evidence="1">
    <location>
        <begin position="24"/>
        <end position="49"/>
    </location>
</feature>
<feature type="peptide" id="PRO_0000392185" description="Conotoxin Cap15b">
    <location>
        <begin position="50"/>
        <end position="85"/>
    </location>
</feature>
<feature type="modified residue" description="Pyrrolidone carboxylic acid" evidence="1">
    <location>
        <position position="50"/>
    </location>
</feature>
<proteinExistence type="evidence at transcript level"/>
<name>CO2FB_CONCE</name>
<dbReference type="EMBL" id="GQ414741">
    <property type="protein sequence ID" value="ACV07671.1"/>
    <property type="molecule type" value="mRNA"/>
</dbReference>
<dbReference type="SMR" id="C8CK78"/>
<dbReference type="ConoServer" id="3866">
    <property type="toxin name" value="Cap15b precursor"/>
</dbReference>
<dbReference type="GO" id="GO:0005576">
    <property type="term" value="C:extracellular region"/>
    <property type="evidence" value="ECO:0007669"/>
    <property type="project" value="UniProtKB-SubCell"/>
</dbReference>
<dbReference type="GO" id="GO:0008200">
    <property type="term" value="F:ion channel inhibitor activity"/>
    <property type="evidence" value="ECO:0007669"/>
    <property type="project" value="InterPro"/>
</dbReference>
<dbReference type="GO" id="GO:0090729">
    <property type="term" value="F:toxin activity"/>
    <property type="evidence" value="ECO:0007669"/>
    <property type="project" value="UniProtKB-KW"/>
</dbReference>
<dbReference type="InterPro" id="IPR004214">
    <property type="entry name" value="Conotoxin"/>
</dbReference>
<dbReference type="Pfam" id="PF02950">
    <property type="entry name" value="Conotoxin"/>
    <property type="match status" value="1"/>
</dbReference>
<protein>
    <recommendedName>
        <fullName>Conotoxin Cap15b</fullName>
    </recommendedName>
</protein>
<reference key="1">
    <citation type="submission" date="2009-07" db="EMBL/GenBank/DDBJ databases">
        <title>A novel class of conotoxin cDNAs with a distinctive cysteine arrangement.</title>
        <authorList>
            <person name="Wang L."/>
            <person name="Jiang X."/>
            <person name="Wu Y."/>
            <person name="Zhou M."/>
            <person name="Xu A."/>
        </authorList>
    </citation>
    <scope>NUCLEOTIDE SEQUENCE [MRNA]</scope>
    <source>
        <tissue>Venom duct</tissue>
    </source>
</reference>